<organism>
    <name type="scientific">Homo sapiens</name>
    <name type="common">Human</name>
    <dbReference type="NCBI Taxonomy" id="9606"/>
    <lineage>
        <taxon>Eukaryota</taxon>
        <taxon>Metazoa</taxon>
        <taxon>Chordata</taxon>
        <taxon>Craniata</taxon>
        <taxon>Vertebrata</taxon>
        <taxon>Euteleostomi</taxon>
        <taxon>Mammalia</taxon>
        <taxon>Eutheria</taxon>
        <taxon>Euarchontoglires</taxon>
        <taxon>Primates</taxon>
        <taxon>Haplorrhini</taxon>
        <taxon>Catarrhini</taxon>
        <taxon>Hominidae</taxon>
        <taxon>Homo</taxon>
    </lineage>
</organism>
<name>RN220_HUMAN</name>
<proteinExistence type="evidence at protein level"/>
<dbReference type="EC" id="2.3.2.27"/>
<dbReference type="EMBL" id="AK001459">
    <property type="protein sequence ID" value="BAA91704.1"/>
    <property type="status" value="ALT_INIT"/>
    <property type="molecule type" value="mRNA"/>
</dbReference>
<dbReference type="EMBL" id="AK056424">
    <property type="protein sequence ID" value="BAG51705.1"/>
    <property type="molecule type" value="mRNA"/>
</dbReference>
<dbReference type="EMBL" id="AK297228">
    <property type="protein sequence ID" value="BAG59711.1"/>
    <property type="molecule type" value="mRNA"/>
</dbReference>
<dbReference type="EMBL" id="AL122004">
    <property type="status" value="NOT_ANNOTATED_CDS"/>
    <property type="molecule type" value="Genomic_DNA"/>
</dbReference>
<dbReference type="EMBL" id="AL359373">
    <property type="status" value="NOT_ANNOTATED_CDS"/>
    <property type="molecule type" value="Genomic_DNA"/>
</dbReference>
<dbReference type="EMBL" id="AL596225">
    <property type="status" value="NOT_ANNOTATED_CDS"/>
    <property type="molecule type" value="Genomic_DNA"/>
</dbReference>
<dbReference type="EMBL" id="BC034221">
    <property type="protein sequence ID" value="AAH34221.1"/>
    <property type="molecule type" value="mRNA"/>
</dbReference>
<dbReference type="EMBL" id="BC098266">
    <property type="protein sequence ID" value="AAH98266.1"/>
    <property type="molecule type" value="mRNA"/>
</dbReference>
<dbReference type="EMBL" id="BC098300">
    <property type="protein sequence ID" value="AAH98300.1"/>
    <property type="molecule type" value="mRNA"/>
</dbReference>
<dbReference type="CCDS" id="CCDS510.1">
    <molecule id="Q5VTB9-1"/>
</dbReference>
<dbReference type="RefSeq" id="NP_001306885.1">
    <molecule id="Q5VTB9-1"/>
    <property type="nucleotide sequence ID" value="NM_001319956.1"/>
</dbReference>
<dbReference type="RefSeq" id="NP_001306886.1">
    <molecule id="Q5VTB9-3"/>
    <property type="nucleotide sequence ID" value="NM_001319957.2"/>
</dbReference>
<dbReference type="RefSeq" id="NP_001363417.1">
    <molecule id="Q5VTB9-1"/>
    <property type="nucleotide sequence ID" value="NM_001376488.1"/>
</dbReference>
<dbReference type="RefSeq" id="NP_060620.2">
    <molecule id="Q5VTB9-1"/>
    <property type="nucleotide sequence ID" value="NM_018150.3"/>
</dbReference>
<dbReference type="RefSeq" id="XP_016857112.1">
    <property type="nucleotide sequence ID" value="XM_017001623.1"/>
</dbReference>
<dbReference type="RefSeq" id="XP_016857113.1">
    <property type="nucleotide sequence ID" value="XM_017001624.1"/>
</dbReference>
<dbReference type="RefSeq" id="XP_016857114.1">
    <molecule id="Q5VTB9-1"/>
    <property type="nucleotide sequence ID" value="XM_017001625.3"/>
</dbReference>
<dbReference type="RefSeq" id="XP_047280237.1">
    <molecule id="Q5VTB9-3"/>
    <property type="nucleotide sequence ID" value="XM_047424281.1"/>
</dbReference>
<dbReference type="RefSeq" id="XP_054193387.1">
    <molecule id="Q5VTB9-1"/>
    <property type="nucleotide sequence ID" value="XM_054337412.1"/>
</dbReference>
<dbReference type="RefSeq" id="XP_054193388.1">
    <molecule id="Q5VTB9-3"/>
    <property type="nucleotide sequence ID" value="XM_054337413.1"/>
</dbReference>
<dbReference type="BioGRID" id="120481">
    <property type="interactions" value="43"/>
</dbReference>
<dbReference type="FunCoup" id="Q5VTB9">
    <property type="interactions" value="2367"/>
</dbReference>
<dbReference type="IntAct" id="Q5VTB9">
    <property type="interactions" value="21"/>
</dbReference>
<dbReference type="MINT" id="Q5VTB9"/>
<dbReference type="STRING" id="9606.ENSP00000347548"/>
<dbReference type="GlyCosmos" id="Q5VTB9">
    <property type="glycosylation" value="1 site, 1 glycan"/>
</dbReference>
<dbReference type="GlyGen" id="Q5VTB9">
    <property type="glycosylation" value="2 sites, 1 O-linked glycan (1 site)"/>
</dbReference>
<dbReference type="iPTMnet" id="Q5VTB9"/>
<dbReference type="PhosphoSitePlus" id="Q5VTB9"/>
<dbReference type="BioMuta" id="RNF220"/>
<dbReference type="DMDM" id="74756788"/>
<dbReference type="jPOST" id="Q5VTB9"/>
<dbReference type="MassIVE" id="Q5VTB9"/>
<dbReference type="PaxDb" id="9606-ENSP00000347548"/>
<dbReference type="PeptideAtlas" id="Q5VTB9"/>
<dbReference type="ProteomicsDB" id="4573"/>
<dbReference type="ProteomicsDB" id="65319">
    <molecule id="Q5VTB9-1"/>
</dbReference>
<dbReference type="Pumba" id="Q5VTB9"/>
<dbReference type="Antibodypedia" id="32475">
    <property type="antibodies" value="59 antibodies from 15 providers"/>
</dbReference>
<dbReference type="DNASU" id="55182"/>
<dbReference type="Ensembl" id="ENST00000355387.6">
    <molecule id="Q5VTB9-1"/>
    <property type="protein sequence ID" value="ENSP00000347548.2"/>
    <property type="gene ID" value="ENSG00000187147.19"/>
</dbReference>
<dbReference type="Ensembl" id="ENST00000361799.7">
    <molecule id="Q5VTB9-1"/>
    <property type="protein sequence ID" value="ENSP00000354872.2"/>
    <property type="gene ID" value="ENSG00000187147.19"/>
</dbReference>
<dbReference type="GeneID" id="55182"/>
<dbReference type="KEGG" id="hsa:55182"/>
<dbReference type="MANE-Select" id="ENST00000361799.7">
    <property type="protein sequence ID" value="ENSP00000354872.2"/>
    <property type="RefSeq nucleotide sequence ID" value="NM_018150.4"/>
    <property type="RefSeq protein sequence ID" value="NP_060620.2"/>
</dbReference>
<dbReference type="UCSC" id="uc001clv.2">
    <molecule id="Q5VTB9-1"/>
    <property type="organism name" value="human"/>
</dbReference>
<dbReference type="AGR" id="HGNC:25552"/>
<dbReference type="CTD" id="55182"/>
<dbReference type="DisGeNET" id="55182"/>
<dbReference type="GeneCards" id="RNF220"/>
<dbReference type="HGNC" id="HGNC:25552">
    <property type="gene designation" value="RNF220"/>
</dbReference>
<dbReference type="HPA" id="ENSG00000187147">
    <property type="expression patterns" value="Group enriched (brain, skeletal muscle)"/>
</dbReference>
<dbReference type="MalaCards" id="RNF220"/>
<dbReference type="MIM" id="616136">
    <property type="type" value="gene"/>
</dbReference>
<dbReference type="MIM" id="619688">
    <property type="type" value="phenotype"/>
</dbReference>
<dbReference type="neXtProt" id="NX_Q5VTB9"/>
<dbReference type="OpenTargets" id="ENSG00000187147"/>
<dbReference type="PharmGKB" id="PA162401886"/>
<dbReference type="VEuPathDB" id="HostDB:ENSG00000187147"/>
<dbReference type="eggNOG" id="ENOG502QR1N">
    <property type="taxonomic scope" value="Eukaryota"/>
</dbReference>
<dbReference type="GeneTree" id="ENSGT00390000016573"/>
<dbReference type="HOGENOM" id="CLU_035321_0_0_1"/>
<dbReference type="InParanoid" id="Q5VTB9"/>
<dbReference type="OMA" id="EDRNDRX"/>
<dbReference type="OrthoDB" id="6270329at2759"/>
<dbReference type="PAN-GO" id="Q5VTB9">
    <property type="GO annotations" value="2 GO annotations based on evolutionary models"/>
</dbReference>
<dbReference type="PhylomeDB" id="Q5VTB9"/>
<dbReference type="TreeFam" id="TF324716"/>
<dbReference type="PathwayCommons" id="Q5VTB9"/>
<dbReference type="Reactome" id="R-HSA-983168">
    <property type="pathway name" value="Antigen processing: Ubiquitination &amp; Proteasome degradation"/>
</dbReference>
<dbReference type="SignaLink" id="Q5VTB9"/>
<dbReference type="SIGNOR" id="Q5VTB9"/>
<dbReference type="UniPathway" id="UPA00143"/>
<dbReference type="BioGRID-ORCS" id="55182">
    <property type="hits" value="17 hits in 1197 CRISPR screens"/>
</dbReference>
<dbReference type="ChiTaRS" id="RNF220">
    <property type="organism name" value="human"/>
</dbReference>
<dbReference type="GeneWiki" id="RNF220"/>
<dbReference type="GenomeRNAi" id="55182"/>
<dbReference type="Pharos" id="Q5VTB9">
    <property type="development level" value="Tbio"/>
</dbReference>
<dbReference type="PRO" id="PR:Q5VTB9"/>
<dbReference type="Proteomes" id="UP000005640">
    <property type="component" value="Chromosome 1"/>
</dbReference>
<dbReference type="RNAct" id="Q5VTB9">
    <property type="molecule type" value="protein"/>
</dbReference>
<dbReference type="Bgee" id="ENSG00000187147">
    <property type="expression patterns" value="Expressed in C1 segment of cervical spinal cord and 206 other cell types or tissues"/>
</dbReference>
<dbReference type="ExpressionAtlas" id="Q5VTB9">
    <property type="expression patterns" value="baseline and differential"/>
</dbReference>
<dbReference type="GO" id="GO:0005737">
    <property type="term" value="C:cytoplasm"/>
    <property type="evidence" value="ECO:0000250"/>
    <property type="project" value="UniProtKB"/>
</dbReference>
<dbReference type="GO" id="GO:0098978">
    <property type="term" value="C:glutamatergic synapse"/>
    <property type="evidence" value="ECO:0007669"/>
    <property type="project" value="Ensembl"/>
</dbReference>
<dbReference type="GO" id="GO:0005652">
    <property type="term" value="C:nuclear lamina"/>
    <property type="evidence" value="ECO:0000315"/>
    <property type="project" value="UniProtKB"/>
</dbReference>
<dbReference type="GO" id="GO:0005654">
    <property type="term" value="C:nucleoplasm"/>
    <property type="evidence" value="ECO:0000314"/>
    <property type="project" value="HPA"/>
</dbReference>
<dbReference type="GO" id="GO:0005634">
    <property type="term" value="C:nucleus"/>
    <property type="evidence" value="ECO:0000315"/>
    <property type="project" value="UniProtKB"/>
</dbReference>
<dbReference type="GO" id="GO:0098794">
    <property type="term" value="C:postsynapse"/>
    <property type="evidence" value="ECO:0007669"/>
    <property type="project" value="Ensembl"/>
</dbReference>
<dbReference type="GO" id="GO:0032991">
    <property type="term" value="C:protein-containing complex"/>
    <property type="evidence" value="ECO:0000314"/>
    <property type="project" value="GO_Central"/>
</dbReference>
<dbReference type="GO" id="GO:0008013">
    <property type="term" value="F:beta-catenin binding"/>
    <property type="evidence" value="ECO:0000315"/>
    <property type="project" value="UniProtKB"/>
</dbReference>
<dbReference type="GO" id="GO:0061630">
    <property type="term" value="F:ubiquitin protein ligase activity"/>
    <property type="evidence" value="ECO:0000318"/>
    <property type="project" value="GO_Central"/>
</dbReference>
<dbReference type="GO" id="GO:0004842">
    <property type="term" value="F:ubiquitin-protein transferase activity"/>
    <property type="evidence" value="ECO:0000250"/>
    <property type="project" value="UniProtKB"/>
</dbReference>
<dbReference type="GO" id="GO:0008270">
    <property type="term" value="F:zinc ion binding"/>
    <property type="evidence" value="ECO:0007669"/>
    <property type="project" value="UniProtKB-KW"/>
</dbReference>
<dbReference type="GO" id="GO:0021904">
    <property type="term" value="P:dorsal/ventral neural tube patterning"/>
    <property type="evidence" value="ECO:0007669"/>
    <property type="project" value="Ensembl"/>
</dbReference>
<dbReference type="GO" id="GO:0003358">
    <property type="term" value="P:noradrenergic neuron development"/>
    <property type="evidence" value="ECO:0007669"/>
    <property type="project" value="Ensembl"/>
</dbReference>
<dbReference type="GO" id="GO:0090263">
    <property type="term" value="P:positive regulation of canonical Wnt signaling pathway"/>
    <property type="evidence" value="ECO:0000315"/>
    <property type="project" value="UniProtKB"/>
</dbReference>
<dbReference type="GO" id="GO:0051091">
    <property type="term" value="P:positive regulation of DNA-binding transcription factor activity"/>
    <property type="evidence" value="ECO:0000316"/>
    <property type="project" value="MGI"/>
</dbReference>
<dbReference type="GO" id="GO:0051865">
    <property type="term" value="P:protein autoubiquitination"/>
    <property type="evidence" value="ECO:0000250"/>
    <property type="project" value="UniProtKB"/>
</dbReference>
<dbReference type="GO" id="GO:0006513">
    <property type="term" value="P:protein monoubiquitination"/>
    <property type="evidence" value="ECO:0000316"/>
    <property type="project" value="MGI"/>
</dbReference>
<dbReference type="GO" id="GO:0016567">
    <property type="term" value="P:protein ubiquitination"/>
    <property type="evidence" value="ECO:0000250"/>
    <property type="project" value="UniProtKB"/>
</dbReference>
<dbReference type="GO" id="GO:0099149">
    <property type="term" value="P:regulation of postsynaptic neurotransmitter receptor internalization"/>
    <property type="evidence" value="ECO:0007669"/>
    <property type="project" value="Ensembl"/>
</dbReference>
<dbReference type="GO" id="GO:2000677">
    <property type="term" value="P:regulation of transcription regulatory region DNA binding"/>
    <property type="evidence" value="ECO:0000316"/>
    <property type="project" value="MGI"/>
</dbReference>
<dbReference type="CDD" id="cd16563">
    <property type="entry name" value="RING-HC_RNF220"/>
    <property type="match status" value="1"/>
</dbReference>
<dbReference type="FunFam" id="3.30.40.10:FF:000195">
    <property type="entry name" value="E3 ubiquitin-protein ligase RNF220"/>
    <property type="match status" value="1"/>
</dbReference>
<dbReference type="Gene3D" id="3.30.40.10">
    <property type="entry name" value="Zinc/RING finger domain, C3HC4 (zinc finger)"/>
    <property type="match status" value="1"/>
</dbReference>
<dbReference type="InterPro" id="IPR052443">
    <property type="entry name" value="E3_ubiq-ligase_RNF220-like"/>
</dbReference>
<dbReference type="InterPro" id="IPR031824">
    <property type="entry name" value="RNF220_mid"/>
</dbReference>
<dbReference type="InterPro" id="IPR040178">
    <property type="entry name" value="RNF220_RING"/>
</dbReference>
<dbReference type="InterPro" id="IPR001841">
    <property type="entry name" value="Znf_RING"/>
</dbReference>
<dbReference type="InterPro" id="IPR013083">
    <property type="entry name" value="Znf_RING/FYVE/PHD"/>
</dbReference>
<dbReference type="PANTHER" id="PTHR13459:SF3">
    <property type="entry name" value="E3 UBIQUITIN-PROTEIN LIGASE RNF220"/>
    <property type="match status" value="1"/>
</dbReference>
<dbReference type="PANTHER" id="PTHR13459">
    <property type="entry name" value="E3 UBIQUITIN-PROTEIN LIGASE RNF220 ISOFORM X1"/>
    <property type="match status" value="1"/>
</dbReference>
<dbReference type="Pfam" id="PF15926">
    <property type="entry name" value="RNF220"/>
    <property type="match status" value="2"/>
</dbReference>
<dbReference type="Pfam" id="PF13923">
    <property type="entry name" value="zf-C3HC4_2"/>
    <property type="match status" value="1"/>
</dbReference>
<dbReference type="SUPFAM" id="SSF57850">
    <property type="entry name" value="RING/U-box"/>
    <property type="match status" value="1"/>
</dbReference>
<dbReference type="PROSITE" id="PS50089">
    <property type="entry name" value="ZF_RING_2"/>
    <property type="match status" value="1"/>
</dbReference>
<comment type="function">
    <text evidence="2 6 7">E3 ubiquitin-protein ligase that promotes the ubiquitination and proteasomal degradation of SIN3B (By similarity). Independently of its E3 ligase activity, acts as a CTNNB1 stabilizer through USP7-mediated deubiquitination of CTNNB1 promoting Wnt signaling (PubMed:25266658, PubMed:33964137). Plays a critical role in the regulation of nuclear lamina (PubMed:33964137).</text>
</comment>
<comment type="catalytic activity">
    <reaction>
        <text>S-ubiquitinyl-[E2 ubiquitin-conjugating enzyme]-L-cysteine + [acceptor protein]-L-lysine = [E2 ubiquitin-conjugating enzyme]-L-cysteine + N(6)-ubiquitinyl-[acceptor protein]-L-lysine.</text>
        <dbReference type="EC" id="2.3.2.27"/>
    </reaction>
</comment>
<comment type="pathway">
    <text>Protein modification; protein ubiquitination.</text>
</comment>
<comment type="subunit">
    <text evidence="2 6 7">Interacts with SIN3B (By similarity). Interacts with CTNNB1 (via Armadillo repeats 2-8) (PubMed:25266658, PubMed:33964137). Interacts with USP7 (via MATH domain) (PubMed:25266658).</text>
</comment>
<comment type="interaction">
    <interactant intactId="EBI-949963">
        <id>Q5VTB9</id>
    </interactant>
    <interactant intactId="EBI-348496">
        <id>Q969T4</id>
        <label>UBE2E3</label>
    </interactant>
    <organismsDiffer>false</organismsDiffer>
    <experiments>3</experiments>
</comment>
<comment type="subcellular location">
    <subcellularLocation>
        <location evidence="7">Cytoplasm</location>
    </subcellularLocation>
    <subcellularLocation>
        <location evidence="7">Nucleus</location>
    </subcellularLocation>
</comment>
<comment type="alternative products">
    <event type="alternative splicing"/>
    <isoform>
        <id>Q5VTB9-1</id>
        <name>1</name>
        <sequence type="displayed"/>
    </isoform>
    <isoform>
        <id>Q5VTB9-3</id>
        <name>2</name>
        <sequence type="described" ref="VSP_055437 VSP_055438"/>
    </isoform>
</comment>
<comment type="tissue specificity">
    <text evidence="7">Ubiquitously expressed. Abundant in brain and spinal cord, particularly in the cerebellum and cerebral cortex. In fetal tissues expressed in the cerebellum, spinal cord and cortex.</text>
</comment>
<comment type="PTM">
    <text evidence="1">Auto-ubiquitinated; leads to proteasomal degradation.</text>
</comment>
<comment type="disease" evidence="7">
    <disease id="DI-06305">
        <name>Leukodystrophy, hypomyelinating, 23, with ataxia, deafness, liver dysfunction, and dilated cardiomyopathy</name>
        <acronym>HLD23</acronym>
        <description>An autosomal recessive neurodegenerative disorder with systemic manifestations. Affected individuals show delayed motor development and ataxic gait in early childhood that progresses to spastic paraplegia with loss of ambulation in the first decades of life. Additional features include progressive sensorineural hearing loss, hepatic dysfunction, and dilated cardiomyopathy. Death occurs in the first or second decades. Brain imaging shows hypomyelination, diffuse white matter abnormalities, and thin corpus callosum.</description>
        <dbReference type="MIM" id="619688"/>
    </disease>
    <text>The disease is caused by variants affecting the gene represented in this entry.</text>
</comment>
<comment type="sequence caution" evidence="9">
    <conflict type="erroneous initiation">
        <sequence resource="EMBL-CDS" id="BAA91704"/>
    </conflict>
    <text>Truncated N-terminus.</text>
</comment>
<keyword id="KW-0025">Alternative splicing</keyword>
<keyword id="KW-0122">Cardiomyopathy</keyword>
<keyword id="KW-0175">Coiled coil</keyword>
<keyword id="KW-0963">Cytoplasm</keyword>
<keyword id="KW-0209">Deafness</keyword>
<keyword id="KW-0225">Disease variant</keyword>
<keyword id="KW-1017">Isopeptide bond</keyword>
<keyword id="KW-1026">Leukodystrophy</keyword>
<keyword id="KW-0479">Metal-binding</keyword>
<keyword id="KW-0539">Nucleus</keyword>
<keyword id="KW-0597">Phosphoprotein</keyword>
<keyword id="KW-1267">Proteomics identification</keyword>
<keyword id="KW-1185">Reference proteome</keyword>
<keyword id="KW-0808">Transferase</keyword>
<keyword id="KW-0832">Ubl conjugation</keyword>
<keyword id="KW-0833">Ubl conjugation pathway</keyword>
<keyword id="KW-0862">Zinc</keyword>
<keyword id="KW-0863">Zinc-finger</keyword>
<protein>
    <recommendedName>
        <fullName>E3 ubiquitin-protein ligase RNF220</fullName>
        <ecNumber>2.3.2.27</ecNumber>
    </recommendedName>
    <alternativeName>
        <fullName>RING finger protein 220</fullName>
    </alternativeName>
    <alternativeName>
        <fullName evidence="9">RING-type E3 ubiquitin transferase RNF220</fullName>
    </alternativeName>
</protein>
<sequence>MDLHRAAFKMENSSYLPNPLASPALMVLASTAEASRDASIPCQQPRPFGVPVSVDKDVHIPFTNGSYTFASMYHRQGGVPGTFANRDFPPSLLHLHPQFAPPNLDCTPISMLNHSGVGAFRPFASTEDRESYQSAFTPAKRLKNCHDTESPHLRFSDADGKEYDFGTQLPSSSPGSLKVDDTGKKIFAVSGLISDREASSSPEDRNDRCKKKAAALFDSQAPICPICQVLLRPSELQEHMEQELEQLAQLPSSKNSLLKDAMAPGTPKSLLLSASIKREGESPTASPHSSATDDLHHSDRYQTFLRVRANRQTRLNARIGKMKRRKQDEGQREGSCMAEDDAVDIEHENNNRFEEYEWCGQKRIRATTLLEGGFRGSGFIMCSGKENPDSDADLDVDGDDTLEYGKPQYTEADVIPCTGEEPGEAKEREALRGAVLNGGPPSTRITPEFSKWASDEMPSTSNGESSKQEAMQKTCKNSDIEKITEDSAVTTFEALKARVRELERQLSRGDRYKCLICMDSYSMPLTSIQCWHVHCEECWLRTLGAKKLCPQCNTITAPGDLRRIYL</sequence>
<gene>
    <name type="primary">RNF220</name>
    <name type="synonym">C1orf164</name>
</gene>
<evidence type="ECO:0000250" key="1"/>
<evidence type="ECO:0000250" key="2">
    <source>
        <dbReference type="UniProtKB" id="Q6PDX6"/>
    </source>
</evidence>
<evidence type="ECO:0000255" key="3"/>
<evidence type="ECO:0000255" key="4">
    <source>
        <dbReference type="PROSITE-ProRule" id="PRU00175"/>
    </source>
</evidence>
<evidence type="ECO:0000256" key="5">
    <source>
        <dbReference type="SAM" id="MobiDB-lite"/>
    </source>
</evidence>
<evidence type="ECO:0000269" key="6">
    <source>
    </source>
</evidence>
<evidence type="ECO:0000269" key="7">
    <source>
    </source>
</evidence>
<evidence type="ECO:0000303" key="8">
    <source>
    </source>
</evidence>
<evidence type="ECO:0000305" key="9"/>
<evidence type="ECO:0007744" key="10">
    <source>
    </source>
</evidence>
<evidence type="ECO:0007744" key="11">
    <source>
    </source>
</evidence>
<accession>Q5VTB9</accession>
<accession>B3KPJ3</accession>
<accession>B4DLZ9</accession>
<accession>E9PCS1</accession>
<accession>Q4KMX2</accession>
<accession>Q9NVP6</accession>
<reference key="1">
    <citation type="journal article" date="2004" name="Nat. Genet.">
        <title>Complete sequencing and characterization of 21,243 full-length human cDNAs.</title>
        <authorList>
            <person name="Ota T."/>
            <person name="Suzuki Y."/>
            <person name="Nishikawa T."/>
            <person name="Otsuki T."/>
            <person name="Sugiyama T."/>
            <person name="Irie R."/>
            <person name="Wakamatsu A."/>
            <person name="Hayashi K."/>
            <person name="Sato H."/>
            <person name="Nagai K."/>
            <person name="Kimura K."/>
            <person name="Makita H."/>
            <person name="Sekine M."/>
            <person name="Obayashi M."/>
            <person name="Nishi T."/>
            <person name="Shibahara T."/>
            <person name="Tanaka T."/>
            <person name="Ishii S."/>
            <person name="Yamamoto J."/>
            <person name="Saito K."/>
            <person name="Kawai Y."/>
            <person name="Isono Y."/>
            <person name="Nakamura Y."/>
            <person name="Nagahari K."/>
            <person name="Murakami K."/>
            <person name="Yasuda T."/>
            <person name="Iwayanagi T."/>
            <person name="Wagatsuma M."/>
            <person name="Shiratori A."/>
            <person name="Sudo H."/>
            <person name="Hosoiri T."/>
            <person name="Kaku Y."/>
            <person name="Kodaira H."/>
            <person name="Kondo H."/>
            <person name="Sugawara M."/>
            <person name="Takahashi M."/>
            <person name="Kanda K."/>
            <person name="Yokoi T."/>
            <person name="Furuya T."/>
            <person name="Kikkawa E."/>
            <person name="Omura Y."/>
            <person name="Abe K."/>
            <person name="Kamihara K."/>
            <person name="Katsuta N."/>
            <person name="Sato K."/>
            <person name="Tanikawa M."/>
            <person name="Yamazaki M."/>
            <person name="Ninomiya K."/>
            <person name="Ishibashi T."/>
            <person name="Yamashita H."/>
            <person name="Murakawa K."/>
            <person name="Fujimori K."/>
            <person name="Tanai H."/>
            <person name="Kimata M."/>
            <person name="Watanabe M."/>
            <person name="Hiraoka S."/>
            <person name="Chiba Y."/>
            <person name="Ishida S."/>
            <person name="Ono Y."/>
            <person name="Takiguchi S."/>
            <person name="Watanabe S."/>
            <person name="Yosida M."/>
            <person name="Hotuta T."/>
            <person name="Kusano J."/>
            <person name="Kanehori K."/>
            <person name="Takahashi-Fujii A."/>
            <person name="Hara H."/>
            <person name="Tanase T.-O."/>
            <person name="Nomura Y."/>
            <person name="Togiya S."/>
            <person name="Komai F."/>
            <person name="Hara R."/>
            <person name="Takeuchi K."/>
            <person name="Arita M."/>
            <person name="Imose N."/>
            <person name="Musashino K."/>
            <person name="Yuuki H."/>
            <person name="Oshima A."/>
            <person name="Sasaki N."/>
            <person name="Aotsuka S."/>
            <person name="Yoshikawa Y."/>
            <person name="Matsunawa H."/>
            <person name="Ichihara T."/>
            <person name="Shiohata N."/>
            <person name="Sano S."/>
            <person name="Moriya S."/>
            <person name="Momiyama H."/>
            <person name="Satoh N."/>
            <person name="Takami S."/>
            <person name="Terashima Y."/>
            <person name="Suzuki O."/>
            <person name="Nakagawa S."/>
            <person name="Senoh A."/>
            <person name="Mizoguchi H."/>
            <person name="Goto Y."/>
            <person name="Shimizu F."/>
            <person name="Wakebe H."/>
            <person name="Hishigaki H."/>
            <person name="Watanabe T."/>
            <person name="Sugiyama A."/>
            <person name="Takemoto M."/>
            <person name="Kawakami B."/>
            <person name="Yamazaki M."/>
            <person name="Watanabe K."/>
            <person name="Kumagai A."/>
            <person name="Itakura S."/>
            <person name="Fukuzumi Y."/>
            <person name="Fujimori Y."/>
            <person name="Komiyama M."/>
            <person name="Tashiro H."/>
            <person name="Tanigami A."/>
            <person name="Fujiwara T."/>
            <person name="Ono T."/>
            <person name="Yamada K."/>
            <person name="Fujii Y."/>
            <person name="Ozaki K."/>
            <person name="Hirao M."/>
            <person name="Ohmori Y."/>
            <person name="Kawabata A."/>
            <person name="Hikiji T."/>
            <person name="Kobatake N."/>
            <person name="Inagaki H."/>
            <person name="Ikema Y."/>
            <person name="Okamoto S."/>
            <person name="Okitani R."/>
            <person name="Kawakami T."/>
            <person name="Noguchi S."/>
            <person name="Itoh T."/>
            <person name="Shigeta K."/>
            <person name="Senba T."/>
            <person name="Matsumura K."/>
            <person name="Nakajima Y."/>
            <person name="Mizuno T."/>
            <person name="Morinaga M."/>
            <person name="Sasaki M."/>
            <person name="Togashi T."/>
            <person name="Oyama M."/>
            <person name="Hata H."/>
            <person name="Watanabe M."/>
            <person name="Komatsu T."/>
            <person name="Mizushima-Sugano J."/>
            <person name="Satoh T."/>
            <person name="Shirai Y."/>
            <person name="Takahashi Y."/>
            <person name="Nakagawa K."/>
            <person name="Okumura K."/>
            <person name="Nagase T."/>
            <person name="Nomura N."/>
            <person name="Kikuchi H."/>
            <person name="Masuho Y."/>
            <person name="Yamashita R."/>
            <person name="Nakai K."/>
            <person name="Yada T."/>
            <person name="Nakamura Y."/>
            <person name="Ohara O."/>
            <person name="Isogai T."/>
            <person name="Sugano S."/>
        </authorList>
    </citation>
    <scope>NUCLEOTIDE SEQUENCE [LARGE SCALE MRNA] (ISOFORMS 1 AND 2)</scope>
    <source>
        <tissue>Brain</tissue>
    </source>
</reference>
<reference key="2">
    <citation type="journal article" date="2006" name="Nature">
        <title>The DNA sequence and biological annotation of human chromosome 1.</title>
        <authorList>
            <person name="Gregory S.G."/>
            <person name="Barlow K.F."/>
            <person name="McLay K.E."/>
            <person name="Kaul R."/>
            <person name="Swarbreck D."/>
            <person name="Dunham A."/>
            <person name="Scott C.E."/>
            <person name="Howe K.L."/>
            <person name="Woodfine K."/>
            <person name="Spencer C.C.A."/>
            <person name="Jones M.C."/>
            <person name="Gillson C."/>
            <person name="Searle S."/>
            <person name="Zhou Y."/>
            <person name="Kokocinski F."/>
            <person name="McDonald L."/>
            <person name="Evans R."/>
            <person name="Phillips K."/>
            <person name="Atkinson A."/>
            <person name="Cooper R."/>
            <person name="Jones C."/>
            <person name="Hall R.E."/>
            <person name="Andrews T.D."/>
            <person name="Lloyd C."/>
            <person name="Ainscough R."/>
            <person name="Almeida J.P."/>
            <person name="Ambrose K.D."/>
            <person name="Anderson F."/>
            <person name="Andrew R.W."/>
            <person name="Ashwell R.I.S."/>
            <person name="Aubin K."/>
            <person name="Babbage A.K."/>
            <person name="Bagguley C.L."/>
            <person name="Bailey J."/>
            <person name="Beasley H."/>
            <person name="Bethel G."/>
            <person name="Bird C.P."/>
            <person name="Bray-Allen S."/>
            <person name="Brown J.Y."/>
            <person name="Brown A.J."/>
            <person name="Buckley D."/>
            <person name="Burton J."/>
            <person name="Bye J."/>
            <person name="Carder C."/>
            <person name="Chapman J.C."/>
            <person name="Clark S.Y."/>
            <person name="Clarke G."/>
            <person name="Clee C."/>
            <person name="Cobley V."/>
            <person name="Collier R.E."/>
            <person name="Corby N."/>
            <person name="Coville G.J."/>
            <person name="Davies J."/>
            <person name="Deadman R."/>
            <person name="Dunn M."/>
            <person name="Earthrowl M."/>
            <person name="Ellington A.G."/>
            <person name="Errington H."/>
            <person name="Frankish A."/>
            <person name="Frankland J."/>
            <person name="French L."/>
            <person name="Garner P."/>
            <person name="Garnett J."/>
            <person name="Gay L."/>
            <person name="Ghori M.R.J."/>
            <person name="Gibson R."/>
            <person name="Gilby L.M."/>
            <person name="Gillett W."/>
            <person name="Glithero R.J."/>
            <person name="Grafham D.V."/>
            <person name="Griffiths C."/>
            <person name="Griffiths-Jones S."/>
            <person name="Grocock R."/>
            <person name="Hammond S."/>
            <person name="Harrison E.S.I."/>
            <person name="Hart E."/>
            <person name="Haugen E."/>
            <person name="Heath P.D."/>
            <person name="Holmes S."/>
            <person name="Holt K."/>
            <person name="Howden P.J."/>
            <person name="Hunt A.R."/>
            <person name="Hunt S.E."/>
            <person name="Hunter G."/>
            <person name="Isherwood J."/>
            <person name="James R."/>
            <person name="Johnson C."/>
            <person name="Johnson D."/>
            <person name="Joy A."/>
            <person name="Kay M."/>
            <person name="Kershaw J.K."/>
            <person name="Kibukawa M."/>
            <person name="Kimberley A.M."/>
            <person name="King A."/>
            <person name="Knights A.J."/>
            <person name="Lad H."/>
            <person name="Laird G."/>
            <person name="Lawlor S."/>
            <person name="Leongamornlert D.A."/>
            <person name="Lloyd D.M."/>
            <person name="Loveland J."/>
            <person name="Lovell J."/>
            <person name="Lush M.J."/>
            <person name="Lyne R."/>
            <person name="Martin S."/>
            <person name="Mashreghi-Mohammadi M."/>
            <person name="Matthews L."/>
            <person name="Matthews N.S.W."/>
            <person name="McLaren S."/>
            <person name="Milne S."/>
            <person name="Mistry S."/>
            <person name="Moore M.J.F."/>
            <person name="Nickerson T."/>
            <person name="O'Dell C.N."/>
            <person name="Oliver K."/>
            <person name="Palmeiri A."/>
            <person name="Palmer S.A."/>
            <person name="Parker A."/>
            <person name="Patel D."/>
            <person name="Pearce A.V."/>
            <person name="Peck A.I."/>
            <person name="Pelan S."/>
            <person name="Phelps K."/>
            <person name="Phillimore B.J."/>
            <person name="Plumb R."/>
            <person name="Rajan J."/>
            <person name="Raymond C."/>
            <person name="Rouse G."/>
            <person name="Saenphimmachak C."/>
            <person name="Sehra H.K."/>
            <person name="Sheridan E."/>
            <person name="Shownkeen R."/>
            <person name="Sims S."/>
            <person name="Skuce C.D."/>
            <person name="Smith M."/>
            <person name="Steward C."/>
            <person name="Subramanian S."/>
            <person name="Sycamore N."/>
            <person name="Tracey A."/>
            <person name="Tromans A."/>
            <person name="Van Helmond Z."/>
            <person name="Wall M."/>
            <person name="Wallis J.M."/>
            <person name="White S."/>
            <person name="Whitehead S.L."/>
            <person name="Wilkinson J.E."/>
            <person name="Willey D.L."/>
            <person name="Williams H."/>
            <person name="Wilming L."/>
            <person name="Wray P.W."/>
            <person name="Wu Z."/>
            <person name="Coulson A."/>
            <person name="Vaudin M."/>
            <person name="Sulston J.E."/>
            <person name="Durbin R.M."/>
            <person name="Hubbard T."/>
            <person name="Wooster R."/>
            <person name="Dunham I."/>
            <person name="Carter N.P."/>
            <person name="McVean G."/>
            <person name="Ross M.T."/>
            <person name="Harrow J."/>
            <person name="Olson M.V."/>
            <person name="Beck S."/>
            <person name="Rogers J."/>
            <person name="Bentley D.R."/>
        </authorList>
    </citation>
    <scope>NUCLEOTIDE SEQUENCE [LARGE SCALE GENOMIC DNA]</scope>
</reference>
<reference key="3">
    <citation type="journal article" date="2004" name="Genome Res.">
        <title>The status, quality, and expansion of the NIH full-length cDNA project: the Mammalian Gene Collection (MGC).</title>
        <authorList>
            <consortium name="The MGC Project Team"/>
        </authorList>
    </citation>
    <scope>NUCLEOTIDE SEQUENCE [LARGE SCALE MRNA] (ISOFORM 1)</scope>
    <source>
        <tissue>Brain</tissue>
    </source>
</reference>
<reference key="4">
    <citation type="journal article" date="2008" name="Proc. Natl. Acad. Sci. U.S.A.">
        <title>A quantitative atlas of mitotic phosphorylation.</title>
        <authorList>
            <person name="Dephoure N."/>
            <person name="Zhou C."/>
            <person name="Villen J."/>
            <person name="Beausoleil S.A."/>
            <person name="Bakalarski C.E."/>
            <person name="Elledge S.J."/>
            <person name="Gygi S.P."/>
        </authorList>
    </citation>
    <scope>PHOSPHORYLATION [LARGE SCALE ANALYSIS] AT SER-390</scope>
    <scope>IDENTIFICATION BY MASS SPECTROMETRY [LARGE SCALE ANALYSIS]</scope>
    <source>
        <tissue>Cervix carcinoma</tissue>
    </source>
</reference>
<reference key="5">
    <citation type="journal article" date="2009" name="Anal. Chem.">
        <title>Lys-N and trypsin cover complementary parts of the phosphoproteome in a refined SCX-based approach.</title>
        <authorList>
            <person name="Gauci S."/>
            <person name="Helbig A.O."/>
            <person name="Slijper M."/>
            <person name="Krijgsveld J."/>
            <person name="Heck A.J."/>
            <person name="Mohammed S."/>
        </authorList>
    </citation>
    <scope>IDENTIFICATION BY MASS SPECTROMETRY [LARGE SCALE ANALYSIS]</scope>
</reference>
<reference key="6">
    <citation type="journal article" date="2011" name="BMC Syst. Biol.">
        <title>Initial characterization of the human central proteome.</title>
        <authorList>
            <person name="Burkard T.R."/>
            <person name="Planyavsky M."/>
            <person name="Kaupe I."/>
            <person name="Breitwieser F.P."/>
            <person name="Buerckstuemmer T."/>
            <person name="Bennett K.L."/>
            <person name="Superti-Furga G."/>
            <person name="Colinge J."/>
        </authorList>
    </citation>
    <scope>IDENTIFICATION BY MASS SPECTROMETRY [LARGE SCALE ANALYSIS]</scope>
</reference>
<reference key="7">
    <citation type="journal article" date="2014" name="Mol. Cell. Biol.">
        <title>The ubiquitin ligase RNF220 enhances canonical Wnt signaling through USP7-mediated deubiquitination of beta-catenin.</title>
        <authorList>
            <person name="Ma P."/>
            <person name="Yang X."/>
            <person name="Kong Q."/>
            <person name="Li C."/>
            <person name="Yang S."/>
            <person name="Li Y."/>
            <person name="Mao B."/>
        </authorList>
    </citation>
    <scope>INTERACTION WITH CTNNB1 AND USP7</scope>
    <scope>FUNCTION</scope>
</reference>
<reference key="8">
    <citation type="journal article" date="2014" name="Nat. Struct. Mol. Biol.">
        <title>Uncovering global SUMOylation signaling networks in a site-specific manner.</title>
        <authorList>
            <person name="Hendriks I.A."/>
            <person name="D'Souza R.C."/>
            <person name="Yang B."/>
            <person name="Verlaan-de Vries M."/>
            <person name="Mann M."/>
            <person name="Vertegaal A.C."/>
        </authorList>
    </citation>
    <scope>SUMOYLATION [LARGE SCALE ANALYSIS] AT LYS-277</scope>
    <scope>IDENTIFICATION BY MASS SPECTROMETRY [LARGE SCALE ANALYSIS]</scope>
</reference>
<reference key="9">
    <citation type="journal article" date="2021" name="Brain">
        <title>Biallelic mutations in RNF220 cause laminopathies featuring leukodystrophy, ataxia and deafness.</title>
        <authorList>
            <person name="Sferra A."/>
            <person name="Fortugno P."/>
            <person name="Motta M."/>
            <person name="Aiello C."/>
            <person name="Petrini S."/>
            <person name="Ciolfi A."/>
            <person name="Cipressa F."/>
            <person name="Moroni I."/>
            <person name="Leuzzi V."/>
            <person name="Pieroni L."/>
            <person name="Marini F."/>
            <person name="Boespflug Tanguy O."/>
            <person name="Eymard-Pierre E."/>
            <person name="Danti F.R."/>
            <person name="Compagnucci C."/>
            <person name="Zambruno G."/>
            <person name="Brusco A."/>
            <person name="Santorelli F.M."/>
            <person name="Chiapparini L."/>
            <person name="Francalanci P."/>
            <person name="Loizzo A.L."/>
            <person name="Tartaglia M."/>
            <person name="Cestra G."/>
            <person name="Bertini E."/>
        </authorList>
    </citation>
    <scope>VARIANTS HLD23 GLN-363 AND GLN-365</scope>
    <scope>CHARACTERIZATION OF VARIANTS HLD23 GLN-363 AND GLN-365</scope>
    <scope>INTERACTION WITH CTNNB1</scope>
    <scope>FUNCTION</scope>
    <scope>SUBCELLULAR LOCATION</scope>
    <scope>TISSUE SPECIFICITY</scope>
</reference>
<feature type="chain" id="PRO_0000277657" description="E3 ubiquitin-protein ligase RNF220">
    <location>
        <begin position="1"/>
        <end position="566"/>
    </location>
</feature>
<feature type="zinc finger region" description="RING-type" evidence="4">
    <location>
        <begin position="514"/>
        <end position="553"/>
    </location>
</feature>
<feature type="region of interest" description="Disordered" evidence="5">
    <location>
        <begin position="277"/>
        <end position="297"/>
    </location>
</feature>
<feature type="region of interest" description="Required for targeting to the cytoplasm" evidence="1">
    <location>
        <begin position="514"/>
        <end position="522"/>
    </location>
</feature>
<feature type="coiled-coil region" evidence="3">
    <location>
        <begin position="485"/>
        <end position="513"/>
    </location>
</feature>
<feature type="modified residue" description="Phosphoserine" evidence="10">
    <location>
        <position position="390"/>
    </location>
</feature>
<feature type="cross-link" description="Glycyl lysine isopeptide (Lys-Gly) (interchain with G-Cter in SUMO2)" evidence="11">
    <location>
        <position position="277"/>
    </location>
</feature>
<feature type="splice variant" id="VSP_055437" description="In isoform 2." evidence="8">
    <location>
        <begin position="1"/>
        <end position="239"/>
    </location>
</feature>
<feature type="splice variant" id="VSP_055438" description="In isoform 2." evidence="8">
    <original>Q</original>
    <variation>QVCPLCNRPLAGSEQEMSRHVEHCLSK</variation>
    <location>
        <position position="331"/>
    </location>
</feature>
<feature type="sequence variant" id="VAR_086785" description="In HLD23; shows decreased beta-catenin binding." evidence="7">
    <original>R</original>
    <variation>Q</variation>
    <location>
        <position position="363"/>
    </location>
</feature>
<feature type="sequence variant" id="VAR_086786" description="In HLD23; shows decreased beta-catenin binding." evidence="7">
    <original>R</original>
    <variation>Q</variation>
    <location>
        <position position="365"/>
    </location>
</feature>
<feature type="sequence conflict" description="In Ref. 3; AAH98300." evidence="9" ref="3">
    <original>A</original>
    <variation>V</variation>
    <location>
        <position position="84"/>
    </location>
</feature>
<feature type="sequence conflict" description="In Ref. 1; BAG51705." evidence="9" ref="1">
    <original>K</original>
    <variation>E</variation>
    <location>
        <position position="277"/>
    </location>
</feature>